<comment type="function">
    <text evidence="3 4">(Microbial infection) In addition to its role in cysteine synthesis, stimulates the tRNase activity of CdiA-CT from E.coli strain 536 / UPEC; stimulation does not require O-acetylserine sulfhydrylase activity. CdiA is the toxic component of a toxin-immunity protein module, which functions as a cellular contact-dependent growth inhibition (CDI) system. CDI modules allow bacteria to communicate with and inhibit the growth of closely related neighboring bacteria in a contact-dependent fashion (experiments done in strains BW25113 and X90, both K12 derivatives). This protein is not required for CDI of strain EC93, whose toxin may function by forming inner cell membrane pores (PubMed:22333533). CysK stabilizes CdiA-CT, allowing it to bind tRNA substrate; neither CdiA-CT nor CysK bind tRNA alone in vitro (PubMed:27531961).</text>
</comment>
<comment type="catalytic activity">
    <reaction evidence="8">
        <text>O-acetyl-L-serine + hydrogen sulfide = L-cysteine + acetate</text>
        <dbReference type="Rhea" id="RHEA:14829"/>
        <dbReference type="ChEBI" id="CHEBI:29919"/>
        <dbReference type="ChEBI" id="CHEBI:30089"/>
        <dbReference type="ChEBI" id="CHEBI:35235"/>
        <dbReference type="ChEBI" id="CHEBI:58340"/>
        <dbReference type="EC" id="2.5.1.47"/>
    </reaction>
</comment>
<comment type="catalytic activity">
    <reaction evidence="8">
        <text>thioglycolate + 3-chloro-L-alanine = S-carboxymethyl-L-cysteine + chloride + H(+)</text>
        <dbReference type="Rhea" id="RHEA:22868"/>
        <dbReference type="ChEBI" id="CHEBI:15378"/>
        <dbReference type="ChEBI" id="CHEBI:17996"/>
        <dbReference type="ChEBI" id="CHEBI:30066"/>
        <dbReference type="ChEBI" id="CHEBI:57662"/>
        <dbReference type="ChEBI" id="CHEBI:58132"/>
        <dbReference type="EC" id="4.5.1.5"/>
    </reaction>
</comment>
<comment type="cofactor">
    <cofactor evidence="4 8">
        <name>pyridoxal 5'-phosphate</name>
        <dbReference type="ChEBI" id="CHEBI:597326"/>
    </cofactor>
</comment>
<comment type="biophysicochemical properties">
    <kinetics>
        <KM evidence="8">40 mM for 3-chloro-L-alanine</KM>
        <KM evidence="8">15.4 mM for thioglycolate</KM>
    </kinetics>
    <phDependence>
        <text evidence="8">Optimum pH is 9-10.5.</text>
    </phDependence>
    <temperatureDependence>
        <text evidence="8">Optimum temperature is 50 degrees Celsius.</text>
    </temperatureDependence>
</comment>
<comment type="pathway">
    <text>Amino-acid biosynthesis; L-cysteine biosynthesis; L-cysteine from L-serine: step 2/2.</text>
</comment>
<comment type="subunit">
    <text evidence="2 3 4 8">Homodimer (PubMed:27531961, Ref.6). Forms a cysteine synthase complex with 1 copy of CysE (By similarity).</text>
</comment>
<comment type="subunit">
    <text evidence="3 4">(Microbial infection) Interacts with CdiA-CT from strain 536 / UPEC, this is blocked upon preincubation with O-acetyl-L-serine. CysK forms a complex with CdiA-CT/CdiI (PubMed:22333533). One CdiA toxin subunit binds to each subunit of the CysK homodimer, and one CdiI immunity protein binds to each toxin subunit; the immune complex is thus a dimer of trimers. The 4 C-terminal residues of CdiA fit into the active site of CysK (PubMed:27531961).</text>
</comment>
<comment type="interaction">
    <interactant intactId="EBI-553933">
        <id>P0ABK5</id>
    </interactant>
    <interactant intactId="EBI-1133237">
        <id>P0A9D4</id>
        <label>cysE</label>
    </interactant>
    <organismsDiffer>false</organismsDiffer>
    <experiments>4</experiments>
</comment>
<comment type="interaction">
    <interactant intactId="EBI-553933">
        <id>P0ABK5</id>
    </interactant>
    <interactant intactId="EBI-553933">
        <id>P0ABK5</id>
        <label>cysK</label>
    </interactant>
    <organismsDiffer>false</organismsDiffer>
    <experiments>2</experiments>
</comment>
<comment type="induction">
    <text>Repressed by sulfate or cysteine.</text>
</comment>
<comment type="disruption phenotype">
    <text evidence="3 4">Significant decrease in tRNA nuclease activity of contact-dependent growth inhibitor CdiA-CT from strain 536 / UPEC (deletion in strain BW25113).</text>
</comment>
<comment type="similarity">
    <text evidence="10">Belongs to the cysteine synthase/cystathionine beta-synthase family.</text>
</comment>
<feature type="initiator methionine" description="Removed" evidence="5 6 7 8 9">
    <location>
        <position position="1"/>
    </location>
</feature>
<feature type="chain" id="PRO_0000167086" description="Cysteine synthase A">
    <location>
        <begin position="2"/>
        <end position="323"/>
    </location>
</feature>
<feature type="binding site" evidence="2">
    <location>
        <position position="8"/>
    </location>
    <ligand>
        <name>hydrogen sulfide</name>
        <dbReference type="ChEBI" id="CHEBI:29919"/>
        <note>allosteric inhibitor; ligand shared between dimeric partners</note>
    </ligand>
</feature>
<feature type="binding site" description="in other chain" evidence="2">
    <location>
        <position position="35"/>
    </location>
    <ligand>
        <name>hydrogen sulfide</name>
        <dbReference type="ChEBI" id="CHEBI:29919"/>
        <note>allosteric inhibitor; ligand shared between dimeric partners</note>
    </ligand>
</feature>
<feature type="binding site" evidence="1">
    <location>
        <position position="72"/>
    </location>
    <ligand>
        <name>pyridoxal 5'-phosphate</name>
        <dbReference type="ChEBI" id="CHEBI:597326"/>
    </ligand>
</feature>
<feature type="binding site" evidence="1">
    <location>
        <begin position="177"/>
        <end position="181"/>
    </location>
    <ligand>
        <name>pyridoxal 5'-phosphate</name>
        <dbReference type="ChEBI" id="CHEBI:597326"/>
    </ligand>
</feature>
<feature type="binding site" description="in other chain" evidence="2">
    <location>
        <position position="269"/>
    </location>
    <ligand>
        <name>hydrogen sulfide</name>
        <dbReference type="ChEBI" id="CHEBI:29919"/>
        <note>allosteric inhibitor; ligand shared between dimeric partners</note>
    </ligand>
</feature>
<feature type="binding site" evidence="1">
    <location>
        <position position="273"/>
    </location>
    <ligand>
        <name>pyridoxal 5'-phosphate</name>
        <dbReference type="ChEBI" id="CHEBI:597326"/>
    </ligand>
</feature>
<feature type="modified residue" description="N6-(pyridoxal phosphate)lysine" evidence="4">
    <location>
        <position position="42"/>
    </location>
</feature>
<feature type="mutagenesis site" description="Still stimulates tRNase activity of CdiA-CT in vitro and in vivo." evidence="3">
    <original>K</original>
    <variation>A</variation>
    <location>
        <position position="42"/>
    </location>
</feature>
<feature type="sequence conflict" description="In Ref. 2; AAA23654." evidence="10" ref="2">
    <original>L</original>
    <variation>W</variation>
    <location>
        <position position="182"/>
    </location>
</feature>
<feature type="sequence conflict" description="In Ref. 2; AAA23654." evidence="10" ref="2">
    <original>SR</original>
    <variation>TP</variation>
    <location>
        <begin position="186"/>
        <end position="187"/>
    </location>
</feature>
<feature type="strand" evidence="13">
    <location>
        <begin position="5"/>
        <end position="7"/>
    </location>
</feature>
<feature type="helix" evidence="13">
    <location>
        <begin position="8"/>
        <end position="11"/>
    </location>
</feature>
<feature type="strand" evidence="13">
    <location>
        <begin position="17"/>
        <end position="19"/>
    </location>
</feature>
<feature type="strand" evidence="13">
    <location>
        <begin position="21"/>
        <end position="23"/>
    </location>
</feature>
<feature type="strand" evidence="13">
    <location>
        <begin position="28"/>
        <end position="32"/>
    </location>
</feature>
<feature type="helix" evidence="13">
    <location>
        <begin position="44"/>
        <end position="55"/>
    </location>
</feature>
<feature type="strand" evidence="13">
    <location>
        <begin position="64"/>
        <end position="68"/>
    </location>
</feature>
<feature type="helix" evidence="13">
    <location>
        <begin position="72"/>
        <end position="83"/>
    </location>
</feature>
<feature type="strand" evidence="13">
    <location>
        <begin position="88"/>
        <end position="93"/>
    </location>
</feature>
<feature type="helix" evidence="13">
    <location>
        <begin position="98"/>
        <end position="106"/>
    </location>
</feature>
<feature type="strand" evidence="13">
    <location>
        <begin position="110"/>
        <end position="114"/>
    </location>
</feature>
<feature type="helix" evidence="13">
    <location>
        <begin position="116"/>
        <end position="118"/>
    </location>
</feature>
<feature type="helix" evidence="13">
    <location>
        <begin position="119"/>
        <end position="133"/>
    </location>
</feature>
<feature type="turn" evidence="13">
    <location>
        <begin position="135"/>
        <end position="137"/>
    </location>
</feature>
<feature type="strand" evidence="13">
    <location>
        <begin position="138"/>
        <end position="140"/>
    </location>
</feature>
<feature type="turn" evidence="13">
    <location>
        <begin position="143"/>
        <end position="145"/>
    </location>
</feature>
<feature type="helix" evidence="13">
    <location>
        <begin position="148"/>
        <end position="155"/>
    </location>
</feature>
<feature type="helix" evidence="13">
    <location>
        <begin position="157"/>
        <end position="165"/>
    </location>
</feature>
<feature type="strand" evidence="13">
    <location>
        <begin position="171"/>
        <end position="175"/>
    </location>
</feature>
<feature type="strand" evidence="13">
    <location>
        <begin position="177"/>
        <end position="179"/>
    </location>
</feature>
<feature type="helix" evidence="13">
    <location>
        <begin position="180"/>
        <end position="189"/>
    </location>
</feature>
<feature type="turn" evidence="13">
    <location>
        <begin position="190"/>
        <end position="192"/>
    </location>
</feature>
<feature type="strand" evidence="13">
    <location>
        <begin position="199"/>
        <end position="205"/>
    </location>
</feature>
<feature type="helix" evidence="13">
    <location>
        <begin position="210"/>
        <end position="215"/>
    </location>
</feature>
<feature type="helix" evidence="13">
    <location>
        <begin position="241"/>
        <end position="243"/>
    </location>
</feature>
<feature type="strand" evidence="13">
    <location>
        <begin position="246"/>
        <end position="250"/>
    </location>
</feature>
<feature type="helix" evidence="13">
    <location>
        <begin position="252"/>
        <end position="266"/>
    </location>
</feature>
<feature type="helix" evidence="13">
    <location>
        <begin position="272"/>
        <end position="284"/>
    </location>
</feature>
<feature type="helix" evidence="14">
    <location>
        <begin position="288"/>
        <end position="290"/>
    </location>
</feature>
<feature type="strand" evidence="13">
    <location>
        <begin position="295"/>
        <end position="299"/>
    </location>
</feature>
<feature type="helix" evidence="13">
    <location>
        <begin position="303"/>
        <end position="306"/>
    </location>
</feature>
<feature type="strand" evidence="15">
    <location>
        <begin position="309"/>
        <end position="312"/>
    </location>
</feature>
<dbReference type="EC" id="2.5.1.47"/>
<dbReference type="EC" id="4.5.1.5" evidence="8"/>
<dbReference type="EMBL" id="X12615">
    <property type="protein sequence ID" value="CAA31137.1"/>
    <property type="molecule type" value="Genomic_DNA"/>
</dbReference>
<dbReference type="EMBL" id="M21451">
    <property type="protein sequence ID" value="AAA23654.1"/>
    <property type="molecule type" value="Genomic_DNA"/>
</dbReference>
<dbReference type="EMBL" id="U00096">
    <property type="protein sequence ID" value="AAC75467.1"/>
    <property type="molecule type" value="Genomic_DNA"/>
</dbReference>
<dbReference type="EMBL" id="AP009048">
    <property type="protein sequence ID" value="BAA16288.2"/>
    <property type="molecule type" value="Genomic_DNA"/>
</dbReference>
<dbReference type="EMBL" id="M21994">
    <property type="protein sequence ID" value="AAA24383.1"/>
    <property type="molecule type" value="Genomic_DNA"/>
</dbReference>
<dbReference type="PIR" id="E65015">
    <property type="entry name" value="SYECAC"/>
</dbReference>
<dbReference type="RefSeq" id="NP_416909.1">
    <property type="nucleotide sequence ID" value="NC_000913.3"/>
</dbReference>
<dbReference type="RefSeq" id="WP_000034402.1">
    <property type="nucleotide sequence ID" value="NZ_STEB01000039.1"/>
</dbReference>
<dbReference type="PDB" id="5J43">
    <property type="method" value="X-ray"/>
    <property type="resolution" value="2.70 A"/>
    <property type="chains" value="A/E=1-323"/>
</dbReference>
<dbReference type="PDB" id="5J5V">
    <property type="method" value="X-ray"/>
    <property type="resolution" value="2.75 A"/>
    <property type="chains" value="A/D=1-323"/>
</dbReference>
<dbReference type="PDB" id="8ZYC">
    <property type="method" value="EM"/>
    <property type="resolution" value="2.99 A"/>
    <property type="chains" value="A/E=1-323"/>
</dbReference>
<dbReference type="PDB" id="8ZYD">
    <property type="method" value="EM"/>
    <property type="resolution" value="3.04 A"/>
    <property type="chains" value="A/E=1-323"/>
</dbReference>
<dbReference type="PDBsum" id="5J43"/>
<dbReference type="PDBsum" id="5J5V"/>
<dbReference type="PDBsum" id="8ZYC"/>
<dbReference type="PDBsum" id="8ZYD"/>
<dbReference type="SASBDB" id="P0ABK5"/>
<dbReference type="SMR" id="P0ABK5"/>
<dbReference type="BioGRID" id="4259701">
    <property type="interactions" value="32"/>
</dbReference>
<dbReference type="BioGRID" id="851217">
    <property type="interactions" value="1"/>
</dbReference>
<dbReference type="ComplexPortal" id="CPX-3742">
    <property type="entry name" value="cysEK cysteine synthase complex"/>
</dbReference>
<dbReference type="DIP" id="DIP-36170N"/>
<dbReference type="FunCoup" id="P0ABK5">
    <property type="interactions" value="783"/>
</dbReference>
<dbReference type="IntAct" id="P0ABK5">
    <property type="interactions" value="14"/>
</dbReference>
<dbReference type="STRING" id="511145.b2414"/>
<dbReference type="jPOST" id="P0ABK5"/>
<dbReference type="PaxDb" id="511145-b2414"/>
<dbReference type="EnsemblBacteria" id="AAC75467">
    <property type="protein sequence ID" value="AAC75467"/>
    <property type="gene ID" value="b2414"/>
</dbReference>
<dbReference type="GeneID" id="93774717"/>
<dbReference type="GeneID" id="946877"/>
<dbReference type="KEGG" id="ecj:JW2407"/>
<dbReference type="KEGG" id="eco:b2414"/>
<dbReference type="KEGG" id="ecoc:C3026_13420"/>
<dbReference type="PATRIC" id="fig|1411691.4.peg.4317"/>
<dbReference type="EchoBASE" id="EB0189"/>
<dbReference type="eggNOG" id="COG0031">
    <property type="taxonomic scope" value="Bacteria"/>
</dbReference>
<dbReference type="InParanoid" id="P0ABK5"/>
<dbReference type="OMA" id="VVTVFWD"/>
<dbReference type="OrthoDB" id="9805733at2"/>
<dbReference type="PhylomeDB" id="P0ABK5"/>
<dbReference type="BioCyc" id="EcoCyc:ACSERLYA-MONOMER"/>
<dbReference type="BioCyc" id="MetaCyc:ACSERLYA-MONOMER"/>
<dbReference type="BRENDA" id="2.5.1.47">
    <property type="organism ID" value="2026"/>
</dbReference>
<dbReference type="SABIO-RK" id="P0ABK5"/>
<dbReference type="UniPathway" id="UPA00136">
    <property type="reaction ID" value="UER00200"/>
</dbReference>
<dbReference type="PRO" id="PR:P0ABK5"/>
<dbReference type="Proteomes" id="UP000000625">
    <property type="component" value="Chromosome"/>
</dbReference>
<dbReference type="GO" id="GO:0009333">
    <property type="term" value="C:cysteine synthase complex"/>
    <property type="evidence" value="ECO:0000314"/>
    <property type="project" value="EcoCyc"/>
</dbReference>
<dbReference type="GO" id="GO:0005737">
    <property type="term" value="C:cytoplasm"/>
    <property type="evidence" value="ECO:0000318"/>
    <property type="project" value="GO_Central"/>
</dbReference>
<dbReference type="GO" id="GO:0005829">
    <property type="term" value="C:cytosol"/>
    <property type="evidence" value="ECO:0000314"/>
    <property type="project" value="EcoCyc"/>
</dbReference>
<dbReference type="GO" id="GO:0004124">
    <property type="term" value="F:cysteine synthase activity"/>
    <property type="evidence" value="ECO:0000314"/>
    <property type="project" value="EcoliWiki"/>
</dbReference>
<dbReference type="GO" id="GO:0042802">
    <property type="term" value="F:identical protein binding"/>
    <property type="evidence" value="ECO:0000353"/>
    <property type="project" value="IntAct"/>
</dbReference>
<dbReference type="GO" id="GO:0080146">
    <property type="term" value="F:L-cysteine desulfhydrase activity"/>
    <property type="evidence" value="ECO:0000315"/>
    <property type="project" value="EcoCyc"/>
</dbReference>
<dbReference type="GO" id="GO:0042803">
    <property type="term" value="F:protein homodimerization activity"/>
    <property type="evidence" value="ECO:0000314"/>
    <property type="project" value="EcoCyc"/>
</dbReference>
<dbReference type="GO" id="GO:0030170">
    <property type="term" value="F:pyridoxal phosphate binding"/>
    <property type="evidence" value="ECO:0000314"/>
    <property type="project" value="EcoCyc"/>
</dbReference>
<dbReference type="GO" id="GO:0050272">
    <property type="term" value="F:S-carboxymethylcysteine synthase activity"/>
    <property type="evidence" value="ECO:0007669"/>
    <property type="project" value="UniProtKB-EC"/>
</dbReference>
<dbReference type="GO" id="GO:0016740">
    <property type="term" value="F:transferase activity"/>
    <property type="evidence" value="ECO:0000314"/>
    <property type="project" value="EcoliWiki"/>
</dbReference>
<dbReference type="GO" id="GO:0008652">
    <property type="term" value="P:amino acid biosynthetic process"/>
    <property type="evidence" value="ECO:0000314"/>
    <property type="project" value="EcoliWiki"/>
</dbReference>
<dbReference type="GO" id="GO:0006535">
    <property type="term" value="P:cysteine biosynthetic process from serine"/>
    <property type="evidence" value="ECO:0000314"/>
    <property type="project" value="ComplexPortal"/>
</dbReference>
<dbReference type="CDD" id="cd01561">
    <property type="entry name" value="CBS_like"/>
    <property type="match status" value="1"/>
</dbReference>
<dbReference type="FunFam" id="3.40.50.1100:FF:000009">
    <property type="entry name" value="Cysteine synthase"/>
    <property type="match status" value="1"/>
</dbReference>
<dbReference type="Gene3D" id="3.40.50.1100">
    <property type="match status" value="2"/>
</dbReference>
<dbReference type="InterPro" id="IPR005856">
    <property type="entry name" value="Cys_synth"/>
</dbReference>
<dbReference type="InterPro" id="IPR050214">
    <property type="entry name" value="Cys_Synth/Cystath_Beta-Synth"/>
</dbReference>
<dbReference type="InterPro" id="IPR005859">
    <property type="entry name" value="CysK"/>
</dbReference>
<dbReference type="InterPro" id="IPR001216">
    <property type="entry name" value="P-phosphate_BS"/>
</dbReference>
<dbReference type="InterPro" id="IPR001926">
    <property type="entry name" value="TrpB-like_PALP"/>
</dbReference>
<dbReference type="InterPro" id="IPR036052">
    <property type="entry name" value="TrpB-like_PALP_sf"/>
</dbReference>
<dbReference type="NCBIfam" id="TIGR01139">
    <property type="entry name" value="cysK"/>
    <property type="match status" value="1"/>
</dbReference>
<dbReference type="NCBIfam" id="TIGR01136">
    <property type="entry name" value="cysKM"/>
    <property type="match status" value="1"/>
</dbReference>
<dbReference type="NCBIfam" id="NF007989">
    <property type="entry name" value="PRK10717.1"/>
    <property type="match status" value="1"/>
</dbReference>
<dbReference type="PANTHER" id="PTHR10314">
    <property type="entry name" value="CYSTATHIONINE BETA-SYNTHASE"/>
    <property type="match status" value="1"/>
</dbReference>
<dbReference type="Pfam" id="PF00291">
    <property type="entry name" value="PALP"/>
    <property type="match status" value="1"/>
</dbReference>
<dbReference type="SUPFAM" id="SSF53686">
    <property type="entry name" value="Tryptophan synthase beta subunit-like PLP-dependent enzymes"/>
    <property type="match status" value="1"/>
</dbReference>
<dbReference type="PROSITE" id="PS00901">
    <property type="entry name" value="CYS_SYNTHASE"/>
    <property type="match status" value="1"/>
</dbReference>
<proteinExistence type="evidence at protein level"/>
<evidence type="ECO:0000250" key="1"/>
<evidence type="ECO:0000250" key="2">
    <source>
        <dbReference type="UniProtKB" id="P0A1E3"/>
    </source>
</evidence>
<evidence type="ECO:0000269" key="3">
    <source>
    </source>
</evidence>
<evidence type="ECO:0000269" key="4">
    <source>
    </source>
</evidence>
<evidence type="ECO:0000269" key="5">
    <source>
    </source>
</evidence>
<evidence type="ECO:0000269" key="6">
    <source>
    </source>
</evidence>
<evidence type="ECO:0000269" key="7">
    <source>
    </source>
</evidence>
<evidence type="ECO:0000269" key="8">
    <source ref="6"/>
</evidence>
<evidence type="ECO:0000269" key="9">
    <source ref="8"/>
</evidence>
<evidence type="ECO:0000305" key="10"/>
<evidence type="ECO:0007744" key="11">
    <source>
        <dbReference type="PDB" id="5J43"/>
    </source>
</evidence>
<evidence type="ECO:0007744" key="12">
    <source>
        <dbReference type="PDB" id="5J5V"/>
    </source>
</evidence>
<evidence type="ECO:0007829" key="13">
    <source>
        <dbReference type="PDB" id="5J43"/>
    </source>
</evidence>
<evidence type="ECO:0007829" key="14">
    <source>
        <dbReference type="PDB" id="8ZYC"/>
    </source>
</evidence>
<evidence type="ECO:0007829" key="15">
    <source>
        <dbReference type="PDB" id="8ZYD"/>
    </source>
</evidence>
<protein>
    <recommendedName>
        <fullName>Cysteine synthase A</fullName>
        <shortName>CSase A</shortName>
        <ecNumber>2.5.1.47</ecNumber>
    </recommendedName>
    <alternativeName>
        <fullName>O-acetylserine (thiol)-lyase A</fullName>
        <shortName>OAS-TL A</shortName>
    </alternativeName>
    <alternativeName>
        <fullName>O-acetylserine sulfhydrylase A</fullName>
    </alternativeName>
    <alternativeName>
        <fullName>S-carboxymethylcysteine synthase</fullName>
        <ecNumber evidence="8">4.5.1.5</ecNumber>
    </alternativeName>
    <alternativeName>
        <fullName>Sulfate starvation-induced protein 5</fullName>
        <shortName>SSI5</shortName>
    </alternativeName>
</protein>
<gene>
    <name type="primary">cysK</name>
    <name type="synonym">cysZ</name>
    <name type="ordered locus">b2414</name>
    <name type="ordered locus">JW2407</name>
</gene>
<reference key="1">
    <citation type="journal article" date="1988" name="Mol. Microbiol.">
        <title>Phylogeny of metabolic pathways: O-acetylserine sulphydrylase A is homologous to the tryptophan synthase beta subunit.</title>
        <authorList>
            <person name="Levy S."/>
            <person name="Danchin A."/>
        </authorList>
    </citation>
    <scope>NUCLEOTIDE SEQUENCE [GENOMIC DNA]</scope>
    <source>
        <strain>K12</strain>
    </source>
</reference>
<reference key="2">
    <citation type="journal article" date="1988" name="J. Bacteriol.">
        <title>DNA sequences of the cysK regions of Salmonella typhimurium and Escherichia coli and linkage of the cysK regions to ptsH.</title>
        <authorList>
            <person name="Byrne C.R."/>
            <person name="Monroe R.S."/>
            <person name="Ward K.A."/>
            <person name="Kredich N.M."/>
        </authorList>
    </citation>
    <scope>NUCLEOTIDE SEQUENCE [GENOMIC DNA]</scope>
    <source>
        <strain>K12</strain>
    </source>
</reference>
<reference key="3">
    <citation type="journal article" date="1997" name="DNA Res.">
        <title>Construction of a contiguous 874-kb sequence of the Escherichia coli-K12 genome corresponding to 50.0-68.8 min on the linkage map and analysis of its sequence features.</title>
        <authorList>
            <person name="Yamamoto Y."/>
            <person name="Aiba H."/>
            <person name="Baba T."/>
            <person name="Hayashi K."/>
            <person name="Inada T."/>
            <person name="Isono K."/>
            <person name="Itoh T."/>
            <person name="Kimura S."/>
            <person name="Kitagawa M."/>
            <person name="Makino K."/>
            <person name="Miki T."/>
            <person name="Mitsuhashi N."/>
            <person name="Mizobuchi K."/>
            <person name="Mori H."/>
            <person name="Nakade S."/>
            <person name="Nakamura Y."/>
            <person name="Nashimoto H."/>
            <person name="Oshima T."/>
            <person name="Oyama S."/>
            <person name="Saito N."/>
            <person name="Sampei G."/>
            <person name="Satoh Y."/>
            <person name="Sivasundaram S."/>
            <person name="Tagami H."/>
            <person name="Takahashi H."/>
            <person name="Takeda J."/>
            <person name="Takemoto K."/>
            <person name="Uehara K."/>
            <person name="Wada C."/>
            <person name="Yamagata S."/>
            <person name="Horiuchi T."/>
        </authorList>
    </citation>
    <scope>NUCLEOTIDE SEQUENCE [LARGE SCALE GENOMIC DNA]</scope>
    <source>
        <strain>K12 / W3110 / ATCC 27325 / DSM 5911</strain>
    </source>
</reference>
<reference key="4">
    <citation type="journal article" date="1997" name="Science">
        <title>The complete genome sequence of Escherichia coli K-12.</title>
        <authorList>
            <person name="Blattner F.R."/>
            <person name="Plunkett G. III"/>
            <person name="Bloch C.A."/>
            <person name="Perna N.T."/>
            <person name="Burland V."/>
            <person name="Riley M."/>
            <person name="Collado-Vides J."/>
            <person name="Glasner J.D."/>
            <person name="Rode C.K."/>
            <person name="Mayhew G.F."/>
            <person name="Gregor J."/>
            <person name="Davis N.W."/>
            <person name="Kirkpatrick H.A."/>
            <person name="Goeden M.A."/>
            <person name="Rose D.J."/>
            <person name="Mau B."/>
            <person name="Shao Y."/>
        </authorList>
    </citation>
    <scope>NUCLEOTIDE SEQUENCE [LARGE SCALE GENOMIC DNA]</scope>
    <source>
        <strain>K12 / MG1655 / ATCC 47076</strain>
    </source>
</reference>
<reference key="5">
    <citation type="journal article" date="2006" name="Mol. Syst. Biol.">
        <title>Highly accurate genome sequences of Escherichia coli K-12 strains MG1655 and W3110.</title>
        <authorList>
            <person name="Hayashi K."/>
            <person name="Morooka N."/>
            <person name="Yamamoto Y."/>
            <person name="Fujita K."/>
            <person name="Isono K."/>
            <person name="Choi S."/>
            <person name="Ohtsubo E."/>
            <person name="Baba T."/>
            <person name="Wanner B.L."/>
            <person name="Mori H."/>
            <person name="Horiuchi T."/>
        </authorList>
    </citation>
    <scope>NUCLEOTIDE SEQUENCE [LARGE SCALE GENOMIC DNA]</scope>
    <source>
        <strain>K12 / W3110 / ATCC 27325 / DSM 5911</strain>
    </source>
</reference>
<reference key="6">
    <citation type="journal article" date="1989" name="Agric. Biol. Chem.">
        <title>S-carboxymethylcysteine synthase from Escherichia coli.</title>
        <authorList>
            <person name="Kumagai H."/>
            <person name="Suzuki H."/>
            <person name="Shigematsu H."/>
            <person name="Tochikura T."/>
        </authorList>
    </citation>
    <scope>PROTEIN SEQUENCE OF 2-37</scope>
    <scope>FUNCTION AS S-CARBOXYMETHYLCYSTEINE SYNTHASE</scope>
    <scope>CATALYTIC ACTIVITY</scope>
    <scope>SUBUNIT</scope>
    <scope>COFACTOR</scope>
    <scope>BIOPHYSICOCHEMICAL PROPERTIES</scope>
    <source>
        <strain>K12 / W3110 / ATCC 27325 / DSM 5911</strain>
    </source>
</reference>
<reference key="7">
    <citation type="journal article" date="1997" name="Electrophoresis">
        <title>Comparing the predicted and observed properties of proteins encoded in the genome of Escherichia coli K-12.</title>
        <authorList>
            <person name="Link A.J."/>
            <person name="Robison K."/>
            <person name="Church G.M."/>
        </authorList>
    </citation>
    <scope>PROTEIN SEQUENCE OF 2-13</scope>
    <source>
        <strain>K12 / EMG2</strain>
    </source>
</reference>
<reference key="8">
    <citation type="submission" date="1994-09" db="UniProtKB">
        <authorList>
            <person name="Pasquali C."/>
            <person name="Sanchez J.-C."/>
            <person name="Ravier F."/>
            <person name="Golaz O."/>
            <person name="Hughes G.J."/>
            <person name="Frutiger S."/>
            <person name="Paquet N."/>
            <person name="Wilkins M."/>
            <person name="Appel R.D."/>
            <person name="Bairoch A."/>
            <person name="Hochstrasser D.F."/>
        </authorList>
    </citation>
    <scope>PROTEIN SEQUENCE OF 2-12</scope>
    <source>
        <strain>K12 / W3110 / ATCC 27325 / DSM 5911</strain>
    </source>
</reference>
<reference key="9">
    <citation type="journal article" date="1996" name="Eur. J. Biochem.">
        <title>Analysis of global responses by protein and peptide fingerprinting of proteins isolated by two-dimensional gel electrophoresis. Application to the sulfate-starvation response of Escherichia coli.</title>
        <authorList>
            <person name="Quadroni M."/>
            <person name="Staudenmann W."/>
            <person name="Kertesz M.A."/>
            <person name="James P."/>
        </authorList>
    </citation>
    <scope>PROTEIN SEQUENCE OF 2-11; 14-19; 36-42; 127-137 AND 236-242</scope>
    <source>
        <strain>K12 / MC4100 / ATCC 35695 / DSM 6574</strain>
    </source>
</reference>
<reference key="10">
    <citation type="journal article" date="1993" name="Proc. Natl. Acad. Sci. U.S.A.">
        <title>Identifying proteins from two-dimensional gels by molecular mass searching of peptide fragments in protein sequence databases.</title>
        <authorList>
            <person name="Henzel W.J."/>
            <person name="Billeci T.M."/>
            <person name="Stults J.T."/>
            <person name="Wong S.C."/>
            <person name="Grimley C."/>
            <person name="Watanabe C."/>
        </authorList>
    </citation>
    <scope>PROTEIN SEQUENCE OF 2-9</scope>
</reference>
<reference key="11">
    <citation type="journal article" date="1988" name="J. Bacteriol.">
        <title>The ptsH, ptsI, and crr genes of the Escherichia coli phosphoenolpyruvate-dependent phosphotransferase system: a complex operon with several modes of transcription.</title>
        <authorList>
            <person name="de Reuse H."/>
            <person name="Danchin A."/>
        </authorList>
    </citation>
    <scope>NUCLEOTIDE SEQUENCE [GENOMIC DNA] OF 315-323</scope>
</reference>
<reference key="12">
    <citation type="journal article" date="2012" name="Genes Dev.">
        <title>Identification of a target cell permissive factor required for contact-dependent growth inhibition (CDI).</title>
        <authorList>
            <person name="Diner E.J."/>
            <person name="Beck C.M."/>
            <person name="Webb J.S."/>
            <person name="Low D.A."/>
            <person name="Hayes C.S."/>
        </authorList>
    </citation>
    <scope>FUNCTION IN CDI (MICROBIAL INFECTION)</scope>
    <scope>INTERACTION WITH CDIA-CT</scope>
    <scope>SUBUNIT (MICROBIAL INFECTION)</scope>
    <scope>DISRUPTION PHENOTYPE</scope>
    <scope>IDENTIFICATION BY MASS SPECTROMETRY</scope>
    <scope>MUTAGENESIS OF LYS-42</scope>
    <source>
        <strain>K12 / BW25113</strain>
        <strain>K12 / X90</strain>
    </source>
</reference>
<reference evidence="11 12" key="13">
    <citation type="journal article" date="2016" name="Proc. Natl. Acad. Sci. U.S.A.">
        <title>Unraveling the essential role of CysK in CDI toxin activation.</title>
        <authorList>
            <person name="Johnson P.M."/>
            <person name="Beck C.M."/>
            <person name="Morse R.P."/>
            <person name="Garza-Sanchez F."/>
            <person name="Low D.A."/>
            <person name="Hayes C.S."/>
            <person name="Goulding C.W."/>
        </authorList>
    </citation>
    <scope>X-RAY CRYSTALLOGRAPHY (2.70 ANGSTROMS) IN COMPLEX WITH PYRIDOXAL PHOSPHATE AND CDIA AND WITH PYRIDOXAL PHOSPHATE; CDIA AND CDII</scope>
    <scope>FUNCTION (MICROBIAL INFECTION)</scope>
    <scope>SUBUNIT (MICROBIAL INFECTION)</scope>
    <scope>DISRUPTION PHENOTYPE</scope>
    <source>
        <strain>K12 / X90</strain>
    </source>
</reference>
<sequence>MSKIFEDNSLTIGHTPLVRLNRIGNGRILAKVESRNPSFSVKCRIGANMIWDAEKRGVLKPGVELVEPTSGNTGIALAYVAAARGYKLTLTMPETMSIERRKLLKALGANLVLTEGAKGMKGAIQKAEEIVASNPEKYLLLQQFSNPANPEIHEKTTGPEIWEDTDGQVDVFIAGVGTGGTLTGVSRYIKGTKGKTDLISVAVEPTDSPVIAQALAGEEIKPGPHKIQGIGAGFIPANLDLKLVDKVIGITNEEAISTARRLMEEEGILAGISSGAAVAAALKLQEDESFTNKNIVVILPSSGERYLSTALFADLFTEKELQQ</sequence>
<organism>
    <name type="scientific">Escherichia coli (strain K12)</name>
    <dbReference type="NCBI Taxonomy" id="83333"/>
    <lineage>
        <taxon>Bacteria</taxon>
        <taxon>Pseudomonadati</taxon>
        <taxon>Pseudomonadota</taxon>
        <taxon>Gammaproteobacteria</taxon>
        <taxon>Enterobacterales</taxon>
        <taxon>Enterobacteriaceae</taxon>
        <taxon>Escherichia</taxon>
    </lineage>
</organism>
<keyword id="KW-0002">3D-structure</keyword>
<keyword id="KW-0021">Allosteric enzyme</keyword>
<keyword id="KW-0028">Amino-acid biosynthesis</keyword>
<keyword id="KW-0198">Cysteine biosynthesis</keyword>
<keyword id="KW-0903">Direct protein sequencing</keyword>
<keyword id="KW-0456">Lyase</keyword>
<keyword id="KW-0663">Pyridoxal phosphate</keyword>
<keyword id="KW-1185">Reference proteome</keyword>
<keyword id="KW-0808">Transferase</keyword>
<accession>P0ABK5</accession>
<accession>P11096</accession>
<accession>P21546</accession>
<name>CYSK_ECOLI</name>